<organism>
    <name type="scientific">Candida glabrata (strain ATCC 2001 / BCRC 20586 / JCM 3761 / NBRC 0622 / NRRL Y-65 / CBS 138)</name>
    <name type="common">Yeast</name>
    <name type="synonym">Nakaseomyces glabratus</name>
    <dbReference type="NCBI Taxonomy" id="284593"/>
    <lineage>
        <taxon>Eukaryota</taxon>
        <taxon>Fungi</taxon>
        <taxon>Dikarya</taxon>
        <taxon>Ascomycota</taxon>
        <taxon>Saccharomycotina</taxon>
        <taxon>Saccharomycetes</taxon>
        <taxon>Saccharomycetales</taxon>
        <taxon>Saccharomycetaceae</taxon>
        <taxon>Nakaseomyces</taxon>
    </lineage>
</organism>
<accession>Q6FNR1</accession>
<dbReference type="EC" id="2.1.1.33" evidence="1"/>
<dbReference type="EMBL" id="CR380956">
    <property type="protein sequence ID" value="CAG61084.1"/>
    <property type="molecule type" value="Genomic_DNA"/>
</dbReference>
<dbReference type="RefSeq" id="XP_448133.1">
    <property type="nucleotide sequence ID" value="XM_448133.1"/>
</dbReference>
<dbReference type="SMR" id="Q6FNR1"/>
<dbReference type="FunCoup" id="Q6FNR1">
    <property type="interactions" value="574"/>
</dbReference>
<dbReference type="STRING" id="284593.Q6FNR1"/>
<dbReference type="EnsemblFungi" id="CAGL0J09746g-T">
    <property type="protein sequence ID" value="CAGL0J09746g-T-p1"/>
    <property type="gene ID" value="CAGL0J09746g"/>
</dbReference>
<dbReference type="KEGG" id="cgr:2889721"/>
<dbReference type="CGD" id="CAL0132768">
    <property type="gene designation" value="CAGL0J09746g"/>
</dbReference>
<dbReference type="VEuPathDB" id="FungiDB:B1J91_J09746g"/>
<dbReference type="VEuPathDB" id="FungiDB:CAGL0J09746g"/>
<dbReference type="eggNOG" id="KOG3115">
    <property type="taxonomic scope" value="Eukaryota"/>
</dbReference>
<dbReference type="HOGENOM" id="CLU_050910_3_1_1"/>
<dbReference type="InParanoid" id="Q6FNR1"/>
<dbReference type="OMA" id="LPNYFAK"/>
<dbReference type="UniPathway" id="UPA00989"/>
<dbReference type="Proteomes" id="UP000002428">
    <property type="component" value="Chromosome J"/>
</dbReference>
<dbReference type="GO" id="GO:0005634">
    <property type="term" value="C:nucleus"/>
    <property type="evidence" value="ECO:0007669"/>
    <property type="project" value="UniProtKB-SubCell"/>
</dbReference>
<dbReference type="GO" id="GO:0106143">
    <property type="term" value="C:tRNA (m7G46) methyltransferase complex"/>
    <property type="evidence" value="ECO:0007669"/>
    <property type="project" value="EnsemblFungi"/>
</dbReference>
<dbReference type="GO" id="GO:0008176">
    <property type="term" value="F:tRNA (guanine(46)-N7)-methyltransferase activity"/>
    <property type="evidence" value="ECO:0007669"/>
    <property type="project" value="UniProtKB-UniRule"/>
</dbReference>
<dbReference type="GO" id="GO:0000049">
    <property type="term" value="F:tRNA binding"/>
    <property type="evidence" value="ECO:0007669"/>
    <property type="project" value="UniProtKB-UniRule"/>
</dbReference>
<dbReference type="CDD" id="cd02440">
    <property type="entry name" value="AdoMet_MTases"/>
    <property type="match status" value="1"/>
</dbReference>
<dbReference type="FunFam" id="3.40.50.150:FF:000060">
    <property type="entry name" value="tRNA (guanine-N(7)-)-methyltransferase"/>
    <property type="match status" value="1"/>
</dbReference>
<dbReference type="Gene3D" id="3.40.50.150">
    <property type="entry name" value="Vaccinia Virus protein VP39"/>
    <property type="match status" value="1"/>
</dbReference>
<dbReference type="HAMAP" id="MF_03055">
    <property type="entry name" value="tRNA_methyltr_TrmB_euk"/>
    <property type="match status" value="1"/>
</dbReference>
<dbReference type="InterPro" id="IPR029063">
    <property type="entry name" value="SAM-dependent_MTases_sf"/>
</dbReference>
<dbReference type="InterPro" id="IPR025763">
    <property type="entry name" value="Trm8_euk"/>
</dbReference>
<dbReference type="InterPro" id="IPR003358">
    <property type="entry name" value="tRNA_(Gua-N-7)_MeTrfase_Trmb"/>
</dbReference>
<dbReference type="NCBIfam" id="TIGR00091">
    <property type="entry name" value="tRNA (guanosine(46)-N7)-methyltransferase TrmB"/>
    <property type="match status" value="1"/>
</dbReference>
<dbReference type="PANTHER" id="PTHR23417">
    <property type="entry name" value="3-DEOXY-D-MANNO-OCTULOSONIC-ACID TRANSFERASE/TRNA GUANINE-N 7 - -METHYLTRANSFERASE"/>
    <property type="match status" value="1"/>
</dbReference>
<dbReference type="PANTHER" id="PTHR23417:SF16">
    <property type="entry name" value="TRNA (GUANINE-N(7)-)-METHYLTRANSFERASE"/>
    <property type="match status" value="1"/>
</dbReference>
<dbReference type="Pfam" id="PF02390">
    <property type="entry name" value="Methyltransf_4"/>
    <property type="match status" value="1"/>
</dbReference>
<dbReference type="SUPFAM" id="SSF53335">
    <property type="entry name" value="S-adenosyl-L-methionine-dependent methyltransferases"/>
    <property type="match status" value="1"/>
</dbReference>
<dbReference type="PROSITE" id="PS51625">
    <property type="entry name" value="SAM_MT_TRMB"/>
    <property type="match status" value="1"/>
</dbReference>
<name>TRMB_CANGA</name>
<sequence>MKAKPLSNDPGSKRYAYRVNKEENRKELKHVKIDESSLVEGHQVDLPKKRFYRQRAHSNPFSDHQLEYPGSPEEMDWTKLYPHYVDPESGKMTKKVTIADIGCGFGGLLVDLSPEFPDDLILGMEIRVQVTNYVEDRIIALRTNHVKEQGYQNINVLRGNAMKFLPNFFQKGQLSKMFFCFPDPHFKQRKHKARIITNTLLSEYAYVLREGGIVYTITDVKDLHDWMVKHLTEHPLFERLPEEWEEEDSCVRIMRHATEEGKKVERKKGDKFVACFRRLPTPEII</sequence>
<comment type="function">
    <text evidence="1">Catalyzes the formation of N(7)-methylguanine at position 46 (m7G46) in tRNA.</text>
</comment>
<comment type="catalytic activity">
    <reaction evidence="1">
        <text>guanosine(46) in tRNA + S-adenosyl-L-methionine = N(7)-methylguanosine(46) in tRNA + S-adenosyl-L-homocysteine</text>
        <dbReference type="Rhea" id="RHEA:42708"/>
        <dbReference type="Rhea" id="RHEA-COMP:10188"/>
        <dbReference type="Rhea" id="RHEA-COMP:10189"/>
        <dbReference type="ChEBI" id="CHEBI:57856"/>
        <dbReference type="ChEBI" id="CHEBI:59789"/>
        <dbReference type="ChEBI" id="CHEBI:74269"/>
        <dbReference type="ChEBI" id="CHEBI:74480"/>
        <dbReference type="EC" id="2.1.1.33"/>
    </reaction>
</comment>
<comment type="pathway">
    <text evidence="1">tRNA modification; N(7)-methylguanine-tRNA biosynthesis.</text>
</comment>
<comment type="subunit">
    <text evidence="1">Forms a complex with TRM82.</text>
</comment>
<comment type="subcellular location">
    <subcellularLocation>
        <location evidence="1">Nucleus</location>
    </subcellularLocation>
</comment>
<comment type="similarity">
    <text evidence="1">Belongs to the class I-like SAM-binding methyltransferase superfamily. TrmB family.</text>
</comment>
<evidence type="ECO:0000255" key="1">
    <source>
        <dbReference type="HAMAP-Rule" id="MF_03055"/>
    </source>
</evidence>
<reference key="1">
    <citation type="journal article" date="2004" name="Nature">
        <title>Genome evolution in yeasts.</title>
        <authorList>
            <person name="Dujon B."/>
            <person name="Sherman D."/>
            <person name="Fischer G."/>
            <person name="Durrens P."/>
            <person name="Casaregola S."/>
            <person name="Lafontaine I."/>
            <person name="de Montigny J."/>
            <person name="Marck C."/>
            <person name="Neuveglise C."/>
            <person name="Talla E."/>
            <person name="Goffard N."/>
            <person name="Frangeul L."/>
            <person name="Aigle M."/>
            <person name="Anthouard V."/>
            <person name="Babour A."/>
            <person name="Barbe V."/>
            <person name="Barnay S."/>
            <person name="Blanchin S."/>
            <person name="Beckerich J.-M."/>
            <person name="Beyne E."/>
            <person name="Bleykasten C."/>
            <person name="Boisrame A."/>
            <person name="Boyer J."/>
            <person name="Cattolico L."/>
            <person name="Confanioleri F."/>
            <person name="de Daruvar A."/>
            <person name="Despons L."/>
            <person name="Fabre E."/>
            <person name="Fairhead C."/>
            <person name="Ferry-Dumazet H."/>
            <person name="Groppi A."/>
            <person name="Hantraye F."/>
            <person name="Hennequin C."/>
            <person name="Jauniaux N."/>
            <person name="Joyet P."/>
            <person name="Kachouri R."/>
            <person name="Kerrest A."/>
            <person name="Koszul R."/>
            <person name="Lemaire M."/>
            <person name="Lesur I."/>
            <person name="Ma L."/>
            <person name="Muller H."/>
            <person name="Nicaud J.-M."/>
            <person name="Nikolski M."/>
            <person name="Oztas S."/>
            <person name="Ozier-Kalogeropoulos O."/>
            <person name="Pellenz S."/>
            <person name="Potier S."/>
            <person name="Richard G.-F."/>
            <person name="Straub M.-L."/>
            <person name="Suleau A."/>
            <person name="Swennen D."/>
            <person name="Tekaia F."/>
            <person name="Wesolowski-Louvel M."/>
            <person name="Westhof E."/>
            <person name="Wirth B."/>
            <person name="Zeniou-Meyer M."/>
            <person name="Zivanovic Y."/>
            <person name="Bolotin-Fukuhara M."/>
            <person name="Thierry A."/>
            <person name="Bouchier C."/>
            <person name="Caudron B."/>
            <person name="Scarpelli C."/>
            <person name="Gaillardin C."/>
            <person name="Weissenbach J."/>
            <person name="Wincker P."/>
            <person name="Souciet J.-L."/>
        </authorList>
    </citation>
    <scope>NUCLEOTIDE SEQUENCE [LARGE SCALE GENOMIC DNA]</scope>
    <source>
        <strain>ATCC 2001 / BCRC 20586 / JCM 3761 / NBRC 0622 / NRRL Y-65 / CBS 138</strain>
    </source>
</reference>
<feature type="chain" id="PRO_0000370592" description="tRNA (guanine-N(7)-)-methyltransferase">
    <location>
        <begin position="1"/>
        <end position="285"/>
    </location>
</feature>
<feature type="active site" evidence="1">
    <location>
        <position position="183"/>
    </location>
</feature>
<feature type="binding site" evidence="1">
    <location>
        <position position="102"/>
    </location>
    <ligand>
        <name>S-adenosyl-L-methionine</name>
        <dbReference type="ChEBI" id="CHEBI:59789"/>
    </ligand>
</feature>
<feature type="binding site" evidence="1">
    <location>
        <begin position="125"/>
        <end position="126"/>
    </location>
    <ligand>
        <name>S-adenosyl-L-methionine</name>
        <dbReference type="ChEBI" id="CHEBI:59789"/>
    </ligand>
</feature>
<feature type="binding site" evidence="1">
    <location>
        <begin position="160"/>
        <end position="161"/>
    </location>
    <ligand>
        <name>S-adenosyl-L-methionine</name>
        <dbReference type="ChEBI" id="CHEBI:59789"/>
    </ligand>
</feature>
<feature type="binding site" evidence="1">
    <location>
        <position position="180"/>
    </location>
    <ligand>
        <name>S-adenosyl-L-methionine</name>
        <dbReference type="ChEBI" id="CHEBI:59789"/>
    </ligand>
</feature>
<feature type="binding site" evidence="1">
    <location>
        <begin position="258"/>
        <end position="260"/>
    </location>
    <ligand>
        <name>S-adenosyl-L-methionine</name>
        <dbReference type="ChEBI" id="CHEBI:59789"/>
    </ligand>
</feature>
<keyword id="KW-0489">Methyltransferase</keyword>
<keyword id="KW-0539">Nucleus</keyword>
<keyword id="KW-1185">Reference proteome</keyword>
<keyword id="KW-0694">RNA-binding</keyword>
<keyword id="KW-0949">S-adenosyl-L-methionine</keyword>
<keyword id="KW-0808">Transferase</keyword>
<keyword id="KW-0819">tRNA processing</keyword>
<keyword id="KW-0820">tRNA-binding</keyword>
<protein>
    <recommendedName>
        <fullName evidence="1">tRNA (guanine-N(7)-)-methyltransferase</fullName>
        <ecNumber evidence="1">2.1.1.33</ecNumber>
    </recommendedName>
    <alternativeName>
        <fullName evidence="1">Transfer RNA methyltransferase 8</fullName>
    </alternativeName>
    <alternativeName>
        <fullName evidence="1">tRNA (guanine(46)-N(7))-methyltransferase</fullName>
    </alternativeName>
    <alternativeName>
        <fullName evidence="1">tRNA(m7G46)-methyltransferase</fullName>
    </alternativeName>
</protein>
<proteinExistence type="inferred from homology"/>
<gene>
    <name evidence="1" type="primary">TRM8</name>
    <name type="ordered locus">CAGL0J09746g</name>
</gene>